<dbReference type="EC" id="2.7.7.3" evidence="1"/>
<dbReference type="EMBL" id="CP000095">
    <property type="protein sequence ID" value="AAZ57818.1"/>
    <property type="molecule type" value="Genomic_DNA"/>
</dbReference>
<dbReference type="RefSeq" id="WP_011293860.1">
    <property type="nucleotide sequence ID" value="NC_007335.2"/>
</dbReference>
<dbReference type="SMR" id="Q46L10"/>
<dbReference type="STRING" id="59920.PMN2A_0326"/>
<dbReference type="KEGG" id="pmn:PMN2A_0326"/>
<dbReference type="HOGENOM" id="CLU_100149_0_1_3"/>
<dbReference type="OrthoDB" id="9806661at2"/>
<dbReference type="PhylomeDB" id="Q46L10"/>
<dbReference type="UniPathway" id="UPA00241">
    <property type="reaction ID" value="UER00355"/>
</dbReference>
<dbReference type="Proteomes" id="UP000002535">
    <property type="component" value="Chromosome"/>
</dbReference>
<dbReference type="GO" id="GO:0005737">
    <property type="term" value="C:cytoplasm"/>
    <property type="evidence" value="ECO:0007669"/>
    <property type="project" value="UniProtKB-SubCell"/>
</dbReference>
<dbReference type="GO" id="GO:0005524">
    <property type="term" value="F:ATP binding"/>
    <property type="evidence" value="ECO:0007669"/>
    <property type="project" value="UniProtKB-KW"/>
</dbReference>
<dbReference type="GO" id="GO:0004595">
    <property type="term" value="F:pantetheine-phosphate adenylyltransferase activity"/>
    <property type="evidence" value="ECO:0007669"/>
    <property type="project" value="UniProtKB-UniRule"/>
</dbReference>
<dbReference type="GO" id="GO:0015937">
    <property type="term" value="P:coenzyme A biosynthetic process"/>
    <property type="evidence" value="ECO:0007669"/>
    <property type="project" value="UniProtKB-UniRule"/>
</dbReference>
<dbReference type="CDD" id="cd02163">
    <property type="entry name" value="PPAT"/>
    <property type="match status" value="1"/>
</dbReference>
<dbReference type="Gene3D" id="3.40.50.620">
    <property type="entry name" value="HUPs"/>
    <property type="match status" value="1"/>
</dbReference>
<dbReference type="HAMAP" id="MF_00151">
    <property type="entry name" value="PPAT_bact"/>
    <property type="match status" value="1"/>
</dbReference>
<dbReference type="InterPro" id="IPR004821">
    <property type="entry name" value="Cyt_trans-like"/>
</dbReference>
<dbReference type="InterPro" id="IPR001980">
    <property type="entry name" value="PPAT"/>
</dbReference>
<dbReference type="InterPro" id="IPR014729">
    <property type="entry name" value="Rossmann-like_a/b/a_fold"/>
</dbReference>
<dbReference type="NCBIfam" id="TIGR01510">
    <property type="entry name" value="coaD_prev_kdtB"/>
    <property type="match status" value="1"/>
</dbReference>
<dbReference type="NCBIfam" id="TIGR00125">
    <property type="entry name" value="cyt_tran_rel"/>
    <property type="match status" value="1"/>
</dbReference>
<dbReference type="PANTHER" id="PTHR21342">
    <property type="entry name" value="PHOSPHOPANTETHEINE ADENYLYLTRANSFERASE"/>
    <property type="match status" value="1"/>
</dbReference>
<dbReference type="PANTHER" id="PTHR21342:SF1">
    <property type="entry name" value="PHOSPHOPANTETHEINE ADENYLYLTRANSFERASE"/>
    <property type="match status" value="1"/>
</dbReference>
<dbReference type="Pfam" id="PF01467">
    <property type="entry name" value="CTP_transf_like"/>
    <property type="match status" value="1"/>
</dbReference>
<dbReference type="PRINTS" id="PR01020">
    <property type="entry name" value="LPSBIOSNTHSS"/>
</dbReference>
<dbReference type="SUPFAM" id="SSF52374">
    <property type="entry name" value="Nucleotidylyl transferase"/>
    <property type="match status" value="1"/>
</dbReference>
<gene>
    <name evidence="1" type="primary">coaD</name>
    <name type="ordered locus">PMN2A_0326</name>
</gene>
<accession>Q46L10</accession>
<organism>
    <name type="scientific">Prochlorococcus marinus (strain NATL2A)</name>
    <dbReference type="NCBI Taxonomy" id="59920"/>
    <lineage>
        <taxon>Bacteria</taxon>
        <taxon>Bacillati</taxon>
        <taxon>Cyanobacteriota</taxon>
        <taxon>Cyanophyceae</taxon>
        <taxon>Synechococcales</taxon>
        <taxon>Prochlorococcaceae</taxon>
        <taxon>Prochlorococcus</taxon>
    </lineage>
</organism>
<evidence type="ECO:0000255" key="1">
    <source>
        <dbReference type="HAMAP-Rule" id="MF_00151"/>
    </source>
</evidence>
<proteinExistence type="inferred from homology"/>
<feature type="chain" id="PRO_1000011203" description="Phosphopantetheine adenylyltransferase">
    <location>
        <begin position="1"/>
        <end position="158"/>
    </location>
</feature>
<feature type="binding site" evidence="1">
    <location>
        <begin position="8"/>
        <end position="9"/>
    </location>
    <ligand>
        <name>ATP</name>
        <dbReference type="ChEBI" id="CHEBI:30616"/>
    </ligand>
</feature>
<feature type="binding site" evidence="1">
    <location>
        <position position="8"/>
    </location>
    <ligand>
        <name>substrate</name>
    </ligand>
</feature>
<feature type="binding site" evidence="1">
    <location>
        <position position="16"/>
    </location>
    <ligand>
        <name>ATP</name>
        <dbReference type="ChEBI" id="CHEBI:30616"/>
    </ligand>
</feature>
<feature type="binding site" evidence="1">
    <location>
        <position position="40"/>
    </location>
    <ligand>
        <name>substrate</name>
    </ligand>
</feature>
<feature type="binding site" evidence="1">
    <location>
        <position position="72"/>
    </location>
    <ligand>
        <name>substrate</name>
    </ligand>
</feature>
<feature type="binding site" evidence="1">
    <location>
        <position position="86"/>
    </location>
    <ligand>
        <name>substrate</name>
    </ligand>
</feature>
<feature type="binding site" evidence="1">
    <location>
        <begin position="87"/>
        <end position="89"/>
    </location>
    <ligand>
        <name>ATP</name>
        <dbReference type="ChEBI" id="CHEBI:30616"/>
    </ligand>
</feature>
<feature type="binding site" evidence="1">
    <location>
        <position position="97"/>
    </location>
    <ligand>
        <name>ATP</name>
        <dbReference type="ChEBI" id="CHEBI:30616"/>
    </ligand>
</feature>
<feature type="binding site" evidence="1">
    <location>
        <begin position="122"/>
        <end position="128"/>
    </location>
    <ligand>
        <name>ATP</name>
        <dbReference type="ChEBI" id="CHEBI:30616"/>
    </ligand>
</feature>
<feature type="site" description="Transition state stabilizer" evidence="1">
    <location>
        <position position="16"/>
    </location>
</feature>
<reference key="1">
    <citation type="journal article" date="2007" name="PLoS Genet.">
        <title>Patterns and implications of gene gain and loss in the evolution of Prochlorococcus.</title>
        <authorList>
            <person name="Kettler G.C."/>
            <person name="Martiny A.C."/>
            <person name="Huang K."/>
            <person name="Zucker J."/>
            <person name="Coleman M.L."/>
            <person name="Rodrigue S."/>
            <person name="Chen F."/>
            <person name="Lapidus A."/>
            <person name="Ferriera S."/>
            <person name="Johnson J."/>
            <person name="Steglich C."/>
            <person name="Church G.M."/>
            <person name="Richardson P."/>
            <person name="Chisholm S.W."/>
        </authorList>
    </citation>
    <scope>NUCLEOTIDE SEQUENCE [LARGE SCALE GENOMIC DNA]</scope>
    <source>
        <strain>NATL2A</strain>
    </source>
</reference>
<name>COAD_PROMT</name>
<sequence length="158" mass="17787">MKALYPGSFDPLTFGHLDLIQRGSDLFGEVLIAVLENPSKKATFSCERRIEQIKNATKDIPGCRTIAFKGLTVDCAHENNADLILRGLRAMSDFEYELQVAHTNRSLNNQYETIFLATETHHSFLSSSVVKEVARFGGEIRHMVPEFIAKDLMKLNTN</sequence>
<protein>
    <recommendedName>
        <fullName evidence="1">Phosphopantetheine adenylyltransferase</fullName>
        <ecNumber evidence="1">2.7.7.3</ecNumber>
    </recommendedName>
    <alternativeName>
        <fullName evidence="1">Dephospho-CoA pyrophosphorylase</fullName>
    </alternativeName>
    <alternativeName>
        <fullName evidence="1">Pantetheine-phosphate adenylyltransferase</fullName>
        <shortName evidence="1">PPAT</shortName>
    </alternativeName>
</protein>
<comment type="function">
    <text evidence="1">Reversibly transfers an adenylyl group from ATP to 4'-phosphopantetheine, yielding dephospho-CoA (dPCoA) and pyrophosphate.</text>
</comment>
<comment type="catalytic activity">
    <reaction evidence="1">
        <text>(R)-4'-phosphopantetheine + ATP + H(+) = 3'-dephospho-CoA + diphosphate</text>
        <dbReference type="Rhea" id="RHEA:19801"/>
        <dbReference type="ChEBI" id="CHEBI:15378"/>
        <dbReference type="ChEBI" id="CHEBI:30616"/>
        <dbReference type="ChEBI" id="CHEBI:33019"/>
        <dbReference type="ChEBI" id="CHEBI:57328"/>
        <dbReference type="ChEBI" id="CHEBI:61723"/>
        <dbReference type="EC" id="2.7.7.3"/>
    </reaction>
</comment>
<comment type="cofactor">
    <cofactor evidence="1">
        <name>Mg(2+)</name>
        <dbReference type="ChEBI" id="CHEBI:18420"/>
    </cofactor>
</comment>
<comment type="pathway">
    <text evidence="1">Cofactor biosynthesis; coenzyme A biosynthesis; CoA from (R)-pantothenate: step 4/5.</text>
</comment>
<comment type="subunit">
    <text evidence="1">Homohexamer.</text>
</comment>
<comment type="subcellular location">
    <subcellularLocation>
        <location evidence="1">Cytoplasm</location>
    </subcellularLocation>
</comment>
<comment type="similarity">
    <text evidence="1">Belongs to the bacterial CoaD family.</text>
</comment>
<keyword id="KW-0067">ATP-binding</keyword>
<keyword id="KW-0173">Coenzyme A biosynthesis</keyword>
<keyword id="KW-0963">Cytoplasm</keyword>
<keyword id="KW-0460">Magnesium</keyword>
<keyword id="KW-0547">Nucleotide-binding</keyword>
<keyword id="KW-0548">Nucleotidyltransferase</keyword>
<keyword id="KW-1185">Reference proteome</keyword>
<keyword id="KW-0808">Transferase</keyword>